<gene>
    <name type="primary">PI4KB</name>
    <name type="synonym">PIK4CB</name>
</gene>
<sequence>MGDTVVAPAPLKPASESTPGPPGNNGGSLLSVITEGVGELSVIDPEVAQKACQEVLQKVKLSHGGVASSDRGTPLELVNGDGVDGEIRCLDDPPTGIREEDDETEATVASGTAKGARRRRQNNSAKQSWLLRLFESKLFDISMAISYLYNSKEPGVQAYIGNRLFCFRNEDVDFYLPQLLNMYVHMDEDVGDAIKPYIVHRCRQSVDFSLQCALLLGAYSSDMHISTQRHSRGTKLRRLILSDELKPAHRKRELPSLSPAPDTGLSPSKRTHQRSKSDATASISLSSSLKRTASNPKVESEDEELSSSTESIDNSFSSPVRLAPEREFIKSLMAIGKRLATLPTKEQKTQRLISELSLLNHKLPARVWLPTAGFDHHVVRVPHTQAVVLNSKDKAPYLIYVEVLECENFDTTSVPARIPENRIRSTRSVENLPECGISHEQRAGSFSTVPNYDNDDEAWSVDDIGELQVELPEMHTNSCDNISQFSVDSITSQESKEPVFIAAGDIRRRLSEQLAHTPTAFKRDPEDPSAVALKEPWQEKVRRIREGSPYGHLPNWRLLSVIVKCGDDLRQELLAFQVLKQLQSIWEQERVPLWIKPYKILVISADSGMIEPVVNAVSIHQVKKQSQLSLLDYFLQEHGSYTTEAFLSAQRNFVQSCAGYCLVCYLLQVKDRHNGNILLDAEGHIIHIDFGFILSSSPRNLGFETSAFKLTTEFVDVMGGLDGDMFNYYKMLMLQGLIAARKHMDKVVQIVEIMQQGSQLPCFHGSSTIRNLKERFHMSMTEEQLQLLVEQMVDGSMRSITTKLYDGFQYLTNGIM</sequence>
<feature type="initiator methionine" description="Removed" evidence="5">
    <location>
        <position position="1"/>
    </location>
</feature>
<feature type="chain" id="PRO_0000365167" description="Phosphatidylinositol 4-kinase beta">
    <location>
        <begin position="2"/>
        <end position="816"/>
    </location>
</feature>
<feature type="domain" description="PIK helical" evidence="7">
    <location>
        <begin position="49"/>
        <end position="242"/>
    </location>
</feature>
<feature type="domain" description="PI3K/PI4K catalytic" evidence="6">
    <location>
        <begin position="535"/>
        <end position="801"/>
    </location>
</feature>
<feature type="region of interest" description="Disordered" evidence="8">
    <location>
        <begin position="1"/>
        <end position="28"/>
    </location>
</feature>
<feature type="region of interest" description="Interaction with ACBD3" evidence="5">
    <location>
        <begin position="2"/>
        <end position="68"/>
    </location>
</feature>
<feature type="region of interest" description="Disordered" evidence="8">
    <location>
        <begin position="93"/>
        <end position="120"/>
    </location>
</feature>
<feature type="region of interest" description="Disordered" evidence="8">
    <location>
        <begin position="249"/>
        <end position="318"/>
    </location>
</feature>
<feature type="region of interest" description="G-loop" evidence="6">
    <location>
        <begin position="541"/>
        <end position="547"/>
    </location>
</feature>
<feature type="region of interest" description="Catalytic loop" evidence="6">
    <location>
        <begin position="668"/>
        <end position="676"/>
    </location>
</feature>
<feature type="region of interest" description="Activation loop" evidence="6">
    <location>
        <begin position="687"/>
        <end position="711"/>
    </location>
</feature>
<feature type="compositionally biased region" description="Low complexity" evidence="8">
    <location>
        <begin position="278"/>
        <end position="294"/>
    </location>
</feature>
<feature type="modified residue" description="N-acetylglycine" evidence="5">
    <location>
        <position position="2"/>
    </location>
</feature>
<feature type="modified residue" description="Phosphoserine" evidence="5">
    <location>
        <position position="258"/>
    </location>
</feature>
<feature type="modified residue" description="Phosphothreonine" evidence="5">
    <location>
        <position position="263"/>
    </location>
</feature>
<feature type="modified residue" description="Phosphoserine" evidence="5">
    <location>
        <position position="266"/>
    </location>
</feature>
<feature type="modified residue" description="Phosphoserine" evidence="4">
    <location>
        <position position="275"/>
    </location>
</feature>
<feature type="modified residue" description="Phosphoserine" evidence="5">
    <location>
        <position position="277"/>
    </location>
</feature>
<feature type="modified residue" description="Phosphoserine" evidence="4">
    <location>
        <position position="284"/>
    </location>
</feature>
<feature type="modified residue" description="Phosphoserine" evidence="5">
    <location>
        <position position="294"/>
    </location>
</feature>
<feature type="modified residue" description="Phosphoserine" evidence="5">
    <location>
        <position position="428"/>
    </location>
</feature>
<feature type="modified residue" description="Phosphoserine" evidence="5">
    <location>
        <position position="511"/>
    </location>
</feature>
<feature type="modified residue" description="Phosphothreonine" evidence="5">
    <location>
        <position position="517"/>
    </location>
</feature>
<feature type="modified residue" description="Phosphothreonine" evidence="5">
    <location>
        <position position="519"/>
    </location>
</feature>
<dbReference type="EC" id="2.7.1.67" evidence="5"/>
<dbReference type="EMBL" id="DP000710">
    <property type="protein sequence ID" value="ACC64591.1"/>
    <property type="molecule type" value="Genomic_DNA"/>
</dbReference>
<dbReference type="RefSeq" id="XP_032947929.1">
    <property type="nucleotide sequence ID" value="XM_033092038.1"/>
</dbReference>
<dbReference type="SMR" id="B2KI64"/>
<dbReference type="FunCoup" id="B2KI64">
    <property type="interactions" value="3827"/>
</dbReference>
<dbReference type="Ensembl" id="ENSRFET00010035587.1">
    <property type="protein sequence ID" value="ENSRFEP00010032859.1"/>
    <property type="gene ID" value="ENSRFEG00010021595.1"/>
</dbReference>
<dbReference type="GeneID" id="117014323"/>
<dbReference type="GeneTree" id="ENSGT00550000074892"/>
<dbReference type="InParanoid" id="B2KI64"/>
<dbReference type="Proteomes" id="UP000472240">
    <property type="component" value="Chromosome 22"/>
</dbReference>
<dbReference type="GO" id="GO:0000139">
    <property type="term" value="C:Golgi membrane"/>
    <property type="evidence" value="ECO:0007669"/>
    <property type="project" value="UniProtKB-SubCell"/>
</dbReference>
<dbReference type="GO" id="GO:0005741">
    <property type="term" value="C:mitochondrial outer membrane"/>
    <property type="evidence" value="ECO:0007669"/>
    <property type="project" value="UniProtKB-SubCell"/>
</dbReference>
<dbReference type="GO" id="GO:0030867">
    <property type="term" value="C:rough endoplasmic reticulum membrane"/>
    <property type="evidence" value="ECO:0007669"/>
    <property type="project" value="UniProtKB-SubCell"/>
</dbReference>
<dbReference type="GO" id="GO:0004430">
    <property type="term" value="F:1-phosphatidylinositol 4-kinase activity"/>
    <property type="evidence" value="ECO:0000250"/>
    <property type="project" value="UniProtKB"/>
</dbReference>
<dbReference type="GO" id="GO:0071889">
    <property type="term" value="F:14-3-3 protein binding"/>
    <property type="evidence" value="ECO:0000250"/>
    <property type="project" value="UniProtKB"/>
</dbReference>
<dbReference type="GO" id="GO:0005524">
    <property type="term" value="F:ATP binding"/>
    <property type="evidence" value="ECO:0007669"/>
    <property type="project" value="UniProtKB-KW"/>
</dbReference>
<dbReference type="GO" id="GO:0048839">
    <property type="term" value="P:inner ear development"/>
    <property type="evidence" value="ECO:0000250"/>
    <property type="project" value="UniProtKB"/>
</dbReference>
<dbReference type="GO" id="GO:0046854">
    <property type="term" value="P:phosphatidylinositol phosphate biosynthetic process"/>
    <property type="evidence" value="ECO:0007669"/>
    <property type="project" value="InterPro"/>
</dbReference>
<dbReference type="GO" id="GO:0048015">
    <property type="term" value="P:phosphatidylinositol-mediated signaling"/>
    <property type="evidence" value="ECO:0007669"/>
    <property type="project" value="TreeGrafter"/>
</dbReference>
<dbReference type="CDD" id="cd22246">
    <property type="entry name" value="PI4KB_NTD"/>
    <property type="match status" value="1"/>
</dbReference>
<dbReference type="CDD" id="cd05168">
    <property type="entry name" value="PI4Kc_III_beta"/>
    <property type="match status" value="1"/>
</dbReference>
<dbReference type="FunFam" id="3.30.1010.10:FF:000031">
    <property type="entry name" value="Phosphatidylinositol 4-kinase beta"/>
    <property type="match status" value="1"/>
</dbReference>
<dbReference type="FunFam" id="1.10.1070.11:FF:000004">
    <property type="entry name" value="Phosphatidylinositol 4-kinase, catalytic, beta"/>
    <property type="match status" value="1"/>
</dbReference>
<dbReference type="Gene3D" id="1.10.1070.11">
    <property type="entry name" value="Phosphatidylinositol 3-/4-kinase, catalytic domain"/>
    <property type="match status" value="1"/>
</dbReference>
<dbReference type="Gene3D" id="3.30.1010.10">
    <property type="entry name" value="Phosphatidylinositol 3-kinase Catalytic Subunit, Chain A, domain 4"/>
    <property type="match status" value="1"/>
</dbReference>
<dbReference type="InterPro" id="IPR011009">
    <property type="entry name" value="Kinase-like_dom_sf"/>
</dbReference>
<dbReference type="InterPro" id="IPR000403">
    <property type="entry name" value="PI3/4_kinase_cat_dom"/>
</dbReference>
<dbReference type="InterPro" id="IPR036940">
    <property type="entry name" value="PI3/4_kinase_cat_sf"/>
</dbReference>
<dbReference type="InterPro" id="IPR018936">
    <property type="entry name" value="PI3/4_kinase_CS"/>
</dbReference>
<dbReference type="InterPro" id="IPR001263">
    <property type="entry name" value="PI3K_accessory_dom"/>
</dbReference>
<dbReference type="InterPro" id="IPR049160">
    <property type="entry name" value="PI4KB-PIK1_PIK"/>
</dbReference>
<dbReference type="InterPro" id="IPR015433">
    <property type="entry name" value="PI_Kinase"/>
</dbReference>
<dbReference type="PANTHER" id="PTHR10048:SF22">
    <property type="entry name" value="PHOSPHATIDYLINOSITOL 4-KINASE BETA"/>
    <property type="match status" value="1"/>
</dbReference>
<dbReference type="PANTHER" id="PTHR10048">
    <property type="entry name" value="PHOSPHATIDYLINOSITOL KINASE"/>
    <property type="match status" value="1"/>
</dbReference>
<dbReference type="Pfam" id="PF00454">
    <property type="entry name" value="PI3_PI4_kinase"/>
    <property type="match status" value="1"/>
</dbReference>
<dbReference type="Pfam" id="PF21245">
    <property type="entry name" value="PI4KB-PIK1_PIK"/>
    <property type="match status" value="1"/>
</dbReference>
<dbReference type="SMART" id="SM00146">
    <property type="entry name" value="PI3Kc"/>
    <property type="match status" value="1"/>
</dbReference>
<dbReference type="SUPFAM" id="SSF56112">
    <property type="entry name" value="Protein kinase-like (PK-like)"/>
    <property type="match status" value="1"/>
</dbReference>
<dbReference type="PROSITE" id="PS00915">
    <property type="entry name" value="PI3_4_KINASE_1"/>
    <property type="match status" value="1"/>
</dbReference>
<dbReference type="PROSITE" id="PS00916">
    <property type="entry name" value="PI3_4_KINASE_2"/>
    <property type="match status" value="1"/>
</dbReference>
<dbReference type="PROSITE" id="PS50290">
    <property type="entry name" value="PI3_4_KINASE_3"/>
    <property type="match status" value="1"/>
</dbReference>
<dbReference type="PROSITE" id="PS51545">
    <property type="entry name" value="PIK_HELICAL"/>
    <property type="match status" value="1"/>
</dbReference>
<keyword id="KW-0007">Acetylation</keyword>
<keyword id="KW-0067">ATP-binding</keyword>
<keyword id="KW-0256">Endoplasmic reticulum</keyword>
<keyword id="KW-0333">Golgi apparatus</keyword>
<keyword id="KW-0418">Kinase</keyword>
<keyword id="KW-0443">Lipid metabolism</keyword>
<keyword id="KW-0472">Membrane</keyword>
<keyword id="KW-0496">Mitochondrion</keyword>
<keyword id="KW-1000">Mitochondrion outer membrane</keyword>
<keyword id="KW-0547">Nucleotide-binding</keyword>
<keyword id="KW-0597">Phosphoprotein</keyword>
<keyword id="KW-1185">Reference proteome</keyword>
<keyword id="KW-0808">Transferase</keyword>
<accession>B2KI64</accession>
<evidence type="ECO:0000250" key="1"/>
<evidence type="ECO:0000250" key="2">
    <source>
        <dbReference type="UniProtKB" id="O02810"/>
    </source>
</evidence>
<evidence type="ECO:0000250" key="3">
    <source>
        <dbReference type="UniProtKB" id="O08561"/>
    </source>
</evidence>
<evidence type="ECO:0000250" key="4">
    <source>
        <dbReference type="UniProtKB" id="Q8BKC8"/>
    </source>
</evidence>
<evidence type="ECO:0000250" key="5">
    <source>
        <dbReference type="UniProtKB" id="Q9UBF8"/>
    </source>
</evidence>
<evidence type="ECO:0000255" key="6">
    <source>
        <dbReference type="PROSITE-ProRule" id="PRU00269"/>
    </source>
</evidence>
<evidence type="ECO:0000255" key="7">
    <source>
        <dbReference type="PROSITE-ProRule" id="PRU00878"/>
    </source>
</evidence>
<evidence type="ECO:0000256" key="8">
    <source>
        <dbReference type="SAM" id="MobiDB-lite"/>
    </source>
</evidence>
<evidence type="ECO:0000305" key="9"/>
<organism>
    <name type="scientific">Rhinolophus ferrumequinum</name>
    <name type="common">Greater horseshoe bat</name>
    <dbReference type="NCBI Taxonomy" id="59479"/>
    <lineage>
        <taxon>Eukaryota</taxon>
        <taxon>Metazoa</taxon>
        <taxon>Chordata</taxon>
        <taxon>Craniata</taxon>
        <taxon>Vertebrata</taxon>
        <taxon>Euteleostomi</taxon>
        <taxon>Mammalia</taxon>
        <taxon>Eutheria</taxon>
        <taxon>Laurasiatheria</taxon>
        <taxon>Chiroptera</taxon>
        <taxon>Yinpterochiroptera</taxon>
        <taxon>Rhinolophoidea</taxon>
        <taxon>Rhinolophidae</taxon>
        <taxon>Rhinolophinae</taxon>
        <taxon>Rhinolophus</taxon>
    </lineage>
</organism>
<reference key="1">
    <citation type="submission" date="2008-04" db="EMBL/GenBank/DDBJ databases">
        <title>NISC comparative sequencing initiative.</title>
        <authorList>
            <person name="Antonellis A."/>
            <person name="Ayele K."/>
            <person name="Benjamin B."/>
            <person name="Blakesley R.W."/>
            <person name="Boakye A."/>
            <person name="Bouffard G.G."/>
            <person name="Brinkley C."/>
            <person name="Brooks S."/>
            <person name="Chu G."/>
            <person name="Coleman H."/>
            <person name="Engle J."/>
            <person name="Gestole M."/>
            <person name="Greene A."/>
            <person name="Guan X."/>
            <person name="Gupta J."/>
            <person name="Haghighi P."/>
            <person name="Han J."/>
            <person name="Hansen N."/>
            <person name="Ho S.-L."/>
            <person name="Hu P."/>
            <person name="Hunter G."/>
            <person name="Hurle B."/>
            <person name="Idol J.R."/>
            <person name="Kwong P."/>
            <person name="Laric P."/>
            <person name="Larson S."/>
            <person name="Lee-Lin S.-Q."/>
            <person name="Legaspi R."/>
            <person name="Madden M."/>
            <person name="Maduro Q.L."/>
            <person name="Maduro V.B."/>
            <person name="Margulies E.H."/>
            <person name="Masiello C."/>
            <person name="Maskeri B."/>
            <person name="McDowell J."/>
            <person name="Mojidi H.A."/>
            <person name="Mullikin J.C."/>
            <person name="Oestreicher J.S."/>
            <person name="Park M."/>
            <person name="Portnoy M.E."/>
            <person name="Prasad A."/>
            <person name="Puri O."/>
            <person name="Reddix-Dugue N."/>
            <person name="Schandler K."/>
            <person name="Schueler M.G."/>
            <person name="Sison C."/>
            <person name="Stantripop S."/>
            <person name="Stephen E."/>
            <person name="Taye A."/>
            <person name="Thomas J.W."/>
            <person name="Thomas P.J."/>
            <person name="Tsipouri V."/>
            <person name="Ung L."/>
            <person name="Vogt J.L."/>
            <person name="Wetherby K.D."/>
            <person name="Young A."/>
            <person name="Green E.D."/>
        </authorList>
    </citation>
    <scope>NUCLEOTIDE SEQUENCE [LARGE SCALE GENOMIC DNA]</scope>
</reference>
<comment type="function">
    <text evidence="3 5">Phosphorylates phosphatidylinositol (PI) in the first committed step in the production of the second messenger inositol-1,4,5,-trisphosphate (PIP). May regulate Golgi disintegration/reorganization during mitosis, possibly via its phosphorylation (By similarity). Involved in Golgi-to-plasma membrane trafficking (By similarity). May play an important role in the inner ear development.</text>
</comment>
<comment type="catalytic activity">
    <reaction evidence="5">
        <text>a 1,2-diacyl-sn-glycero-3-phospho-(1D-myo-inositol) + ATP = a 1,2-diacyl-sn-glycero-3-phospho-(1D-myo-inositol 4-phosphate) + ADP + H(+)</text>
        <dbReference type="Rhea" id="RHEA:19877"/>
        <dbReference type="ChEBI" id="CHEBI:15378"/>
        <dbReference type="ChEBI" id="CHEBI:30616"/>
        <dbReference type="ChEBI" id="CHEBI:57880"/>
        <dbReference type="ChEBI" id="CHEBI:58178"/>
        <dbReference type="ChEBI" id="CHEBI:456216"/>
        <dbReference type="EC" id="2.7.1.67"/>
    </reaction>
    <physiologicalReaction direction="left-to-right" evidence="5">
        <dbReference type="Rhea" id="RHEA:19878"/>
    </physiologicalReaction>
</comment>
<comment type="cofactor">
    <cofactor evidence="5">
        <name>Mg(2+)</name>
        <dbReference type="ChEBI" id="CHEBI:18420"/>
    </cofactor>
    <cofactor evidence="5">
        <name>Mn(2+)</name>
        <dbReference type="ChEBI" id="CHEBI:29035"/>
    </cofactor>
</comment>
<comment type="activity regulation">
    <text evidence="2">Inhibited by wortmannin. Increased kinase activity upon interaction with NCS1/FREQ.</text>
</comment>
<comment type="subunit">
    <text evidence="3 5">Interacts with ARF1 and ARF3 in the Golgi complex, but not with ARF4, ARF5 or ARF6 (By similarity). Interacts with NCS1/FREQ in a calcium-independent manner. Interacts with CALN1/CABP8 and CALN2/CABP7; in a calcium-dependent manner; this interaction competes with NCS1/FREQ binding (By similarity). Interacts with ACBD3. Interacts with ARMH3, YWHAB, YWHAE, YWHAG, YWHAH, YWHAQ, YWHAZ and SFN (By similarity). Interacts with GGA2 (via VHS domain); the interaction is important for PI4KB location at the Golgi apparatus membrane (By similarity). Interacts with ATG9A.</text>
</comment>
<comment type="subcellular location">
    <subcellularLocation>
        <location evidence="1">Endomembrane system</location>
    </subcellularLocation>
    <subcellularLocation>
        <location evidence="1">Mitochondrion outer membrane</location>
        <topology evidence="1">Peripheral membrane protein</topology>
    </subcellularLocation>
    <subcellularLocation>
        <location evidence="1">Rough endoplasmic reticulum membrane</location>
        <topology evidence="1">Peripheral membrane protein</topology>
    </subcellularLocation>
    <subcellularLocation>
        <location evidence="1">Golgi apparatus</location>
    </subcellularLocation>
    <subcellularLocation>
        <location evidence="5">Golgi apparatus membrane</location>
    </subcellularLocation>
    <text evidence="5">Found in the outer membrane of mitochondria and membranes of the rough endoplasmic reticulum. Recruited to the Golgi complex by the small GTPase ARF to stimulate the synthesis of phosphatidylinositol 4,5-bisphosphate (PIP2) on the Golgi complex. Recruited to the Golgi apparatus membrane by ACBD3, GGA2 is also involved in the recruitment.</text>
</comment>
<comment type="similarity">
    <text evidence="9">Belongs to the PI3/PI4-kinase family. Type III PI4K subfamily.</text>
</comment>
<proteinExistence type="inferred from homology"/>
<name>PI4KB_RHIFE</name>
<protein>
    <recommendedName>
        <fullName>Phosphatidylinositol 4-kinase beta</fullName>
        <shortName>PI4K-beta</shortName>
        <shortName>PI4Kbeta</shortName>
        <shortName>PtdIns 4-kinase beta</shortName>
        <ecNumber evidence="5">2.7.1.67</ecNumber>
    </recommendedName>
</protein>